<reference key="1">
    <citation type="journal article" date="1987" name="J. Bacteriol.">
        <title>Nucleotide sequence of the Escherichia coli gene for lipid A disaccharide synthase.</title>
        <authorList>
            <person name="Crowell D.N."/>
            <person name="Reznikoff W.S."/>
            <person name="Raetz C.R.H."/>
        </authorList>
    </citation>
    <scope>NUCLEOTIDE SEQUENCE [GENOMIC DNA]</scope>
</reference>
<reference key="2">
    <citation type="submission" date="1996-02" db="EMBL/GenBank/DDBJ databases">
        <title>Systematic sequencing of the Escherichia coli genome: analysis of the 4.0 - 6.0 min (189,987 - 281,416bp) region.</title>
        <authorList>
            <person name="Takemoto K."/>
            <person name="Mori H."/>
            <person name="Murayama N."/>
            <person name="Kataoka K."/>
            <person name="Yano M."/>
            <person name="Itoh T."/>
            <person name="Yamamoto Y."/>
            <person name="Inokuchi H."/>
            <person name="Miki T."/>
            <person name="Hatada E."/>
            <person name="Fukuda R."/>
            <person name="Ichihara S."/>
            <person name="Mizuno T."/>
            <person name="Makino K."/>
            <person name="Nakata A."/>
            <person name="Yura T."/>
            <person name="Sampei G."/>
            <person name="Mizobuchi K."/>
        </authorList>
    </citation>
    <scope>NUCLEOTIDE SEQUENCE [LARGE SCALE GENOMIC DNA]</scope>
    <source>
        <strain>K12 / W3110 / ATCC 27325 / DSM 5911</strain>
    </source>
</reference>
<reference key="3">
    <citation type="submission" date="1997-01" db="EMBL/GenBank/DDBJ databases">
        <title>Sequence of minutes 4-25 of Escherichia coli.</title>
        <authorList>
            <person name="Chung E."/>
            <person name="Allen E."/>
            <person name="Araujo R."/>
            <person name="Aparicio A.M."/>
            <person name="Davis K."/>
            <person name="Duncan M."/>
            <person name="Federspiel N."/>
            <person name="Hyman R."/>
            <person name="Kalman S."/>
            <person name="Komp C."/>
            <person name="Kurdi O."/>
            <person name="Lew H."/>
            <person name="Lin D."/>
            <person name="Namath A."/>
            <person name="Oefner P."/>
            <person name="Roberts D."/>
            <person name="Schramm S."/>
            <person name="Davis R.W."/>
        </authorList>
    </citation>
    <scope>NUCLEOTIDE SEQUENCE [LARGE SCALE GENOMIC DNA]</scope>
    <source>
        <strain>K12 / MG1655 / ATCC 47076</strain>
    </source>
</reference>
<reference key="4">
    <citation type="journal article" date="1997" name="Science">
        <title>The complete genome sequence of Escherichia coli K-12.</title>
        <authorList>
            <person name="Blattner F.R."/>
            <person name="Plunkett G. III"/>
            <person name="Bloch C.A."/>
            <person name="Perna N.T."/>
            <person name="Burland V."/>
            <person name="Riley M."/>
            <person name="Collado-Vides J."/>
            <person name="Glasner J.D."/>
            <person name="Rode C.K."/>
            <person name="Mayhew G.F."/>
            <person name="Gregor J."/>
            <person name="Davis N.W."/>
            <person name="Kirkpatrick H.A."/>
            <person name="Goeden M.A."/>
            <person name="Rose D.J."/>
            <person name="Mau B."/>
            <person name="Shao Y."/>
        </authorList>
    </citation>
    <scope>NUCLEOTIDE SEQUENCE [LARGE SCALE GENOMIC DNA]</scope>
    <source>
        <strain>K12 / MG1655 / ATCC 47076</strain>
    </source>
</reference>
<reference key="5">
    <citation type="journal article" date="2006" name="Mol. Syst. Biol.">
        <title>Highly accurate genome sequences of Escherichia coli K-12 strains MG1655 and W3110.</title>
        <authorList>
            <person name="Hayashi K."/>
            <person name="Morooka N."/>
            <person name="Yamamoto Y."/>
            <person name="Fujita K."/>
            <person name="Isono K."/>
            <person name="Choi S."/>
            <person name="Ohtsubo E."/>
            <person name="Baba T."/>
            <person name="Wanner B.L."/>
            <person name="Mori H."/>
            <person name="Horiuchi T."/>
        </authorList>
    </citation>
    <scope>NUCLEOTIDE SEQUENCE [LARGE SCALE GENOMIC DNA]</scope>
    <scope>SEQUENCE REVISION TO 149</scope>
    <source>
        <strain>K12 / W3110 / ATCC 27325 / DSM 5911</strain>
    </source>
</reference>
<reference key="6">
    <citation type="journal article" date="1988" name="J. Bacteriol.">
        <title>First committed step of lipid A biosynthesis in Escherichia coli: sequence of the lpxA gene.</title>
        <authorList>
            <person name="Coleman J."/>
            <person name="Raetz C.R.H."/>
        </authorList>
    </citation>
    <scope>NUCLEOTIDE SEQUENCE [GENOMIC DNA] OF 1-19</scope>
</reference>
<reference key="7">
    <citation type="journal article" date="1987" name="J. Bacteriol.">
        <title>Sequence analysis of the Escherichia coli dnaE gene.</title>
        <authorList>
            <person name="Tomasiewicz H.G."/>
            <person name="McHenry C.S."/>
        </authorList>
    </citation>
    <scope>NUCLEOTIDE SEQUENCE [GENOMIC DNA] OF 329-382</scope>
</reference>
<reference key="8">
    <citation type="journal article" date="1984" name="J. Biol. Chem.">
        <title>The biosynthesis of gram-negative endotoxin. Formation of lipid A disaccharides from monosaccharide precursors in extracts of Escherichia coli.</title>
        <authorList>
            <person name="Ray B.L."/>
            <person name="Painter G."/>
            <person name="Raetz C.R."/>
        </authorList>
    </citation>
    <scope>CATALYTIC ACTIVITY</scope>
</reference>
<comment type="function">
    <text>Condensation of UDP-2,3-diacylglucosamine and 2,3-diacylglucosamine-1-phosphate to form lipid A disaccharide, a precursor of lipid A, a phosphorylated glycolipid that anchors the lipopolysaccharide to the outer membrane of the cell.</text>
</comment>
<comment type="catalytic activity">
    <reaction evidence="1">
        <text>2-N,3-O-bis[(3R)-3-hydroxytetradecanoyl]-alpha-D-glucosaminyl 1-phosphate + UDP-2-N,3-O-bis[(3R)-3-hydroxytetradecanoyl]-alpha-D-glucosamine = lipid A disaccharide (E. coli) + UDP + H(+)</text>
        <dbReference type="Rhea" id="RHEA:22668"/>
        <dbReference type="ChEBI" id="CHEBI:15378"/>
        <dbReference type="ChEBI" id="CHEBI:57957"/>
        <dbReference type="ChEBI" id="CHEBI:58223"/>
        <dbReference type="ChEBI" id="CHEBI:58466"/>
        <dbReference type="ChEBI" id="CHEBI:78847"/>
    </reaction>
</comment>
<comment type="catalytic activity">
    <reaction evidence="1">
        <text>a lipid X + a UDP-2-N,3-O-bis[(3R)-3-hydroxyacyl]-alpha-D-glucosamine = a lipid A disaccharide + UDP + H(+)</text>
        <dbReference type="Rhea" id="RHEA:67828"/>
        <dbReference type="ChEBI" id="CHEBI:15378"/>
        <dbReference type="ChEBI" id="CHEBI:58223"/>
        <dbReference type="ChEBI" id="CHEBI:137748"/>
        <dbReference type="ChEBI" id="CHEBI:176338"/>
        <dbReference type="ChEBI" id="CHEBI:176343"/>
        <dbReference type="EC" id="2.4.1.182"/>
    </reaction>
</comment>
<comment type="pathway">
    <text>Glycolipid biosynthesis; lipid IV(A) biosynthesis; lipid IV(A) from (3R)-3-hydroxytetradecanoyl-[acyl-carrier-protein] and UDP-N-acetyl-alpha-D-glucosamine: step 5/6.</text>
</comment>
<comment type="interaction">
    <interactant intactId="EBI-553692">
        <id>P10441</id>
    </interactant>
    <interactant intactId="EBI-301077">
        <id>P0CE47</id>
        <label>tufA</label>
    </interactant>
    <organismsDiffer>false</organismsDiffer>
    <experiments>3</experiments>
</comment>
<comment type="similarity">
    <text evidence="2">Belongs to the LpxB family.</text>
</comment>
<gene>
    <name type="primary">lpxB</name>
    <name type="synonym">pgsB</name>
    <name type="ordered locus">b0182</name>
    <name type="ordered locus">JW0177</name>
</gene>
<evidence type="ECO:0000269" key="1">
    <source>
    </source>
</evidence>
<evidence type="ECO:0000305" key="2"/>
<evidence type="ECO:0007829" key="3">
    <source>
        <dbReference type="PDB" id="5W8X"/>
    </source>
</evidence>
<accession>P10441</accession>
<accession>P78298</accession>
<protein>
    <recommendedName>
        <fullName>Lipid-A-disaccharide synthase</fullName>
        <ecNumber evidence="1">2.4.1.182</ecNumber>
    </recommendedName>
</protein>
<dbReference type="EC" id="2.4.1.182" evidence="1"/>
<dbReference type="EMBL" id="M19334">
    <property type="protein sequence ID" value="AAC36919.1"/>
    <property type="molecule type" value="Genomic_DNA"/>
</dbReference>
<dbReference type="EMBL" id="U70214">
    <property type="protein sequence ID" value="AAB08611.1"/>
    <property type="molecule type" value="Genomic_DNA"/>
</dbReference>
<dbReference type="EMBL" id="U00096">
    <property type="protein sequence ID" value="AAC73293.1"/>
    <property type="molecule type" value="Genomic_DNA"/>
</dbReference>
<dbReference type="EMBL" id="AP009048">
    <property type="protein sequence ID" value="BAA77857.2"/>
    <property type="molecule type" value="Genomic_DNA"/>
</dbReference>
<dbReference type="PIR" id="F64742">
    <property type="entry name" value="SYECLA"/>
</dbReference>
<dbReference type="RefSeq" id="NP_414724.1">
    <property type="nucleotide sequence ID" value="NC_000913.3"/>
</dbReference>
<dbReference type="RefSeq" id="WP_000139654.1">
    <property type="nucleotide sequence ID" value="NZ_SSZK01000004.1"/>
</dbReference>
<dbReference type="PDB" id="5W8N">
    <property type="method" value="X-ray"/>
    <property type="resolution" value="2.02 A"/>
    <property type="chains" value="A=1-382"/>
</dbReference>
<dbReference type="PDB" id="5W8S">
    <property type="method" value="X-ray"/>
    <property type="resolution" value="2.10 A"/>
    <property type="chains" value="A=1-382"/>
</dbReference>
<dbReference type="PDB" id="5W8X">
    <property type="method" value="X-ray"/>
    <property type="resolution" value="1.98 A"/>
    <property type="chains" value="A=1-382"/>
</dbReference>
<dbReference type="PDBsum" id="5W8N"/>
<dbReference type="PDBsum" id="5W8S"/>
<dbReference type="PDBsum" id="5W8X"/>
<dbReference type="SMR" id="P10441"/>
<dbReference type="BioGRID" id="4260870">
    <property type="interactions" value="595"/>
</dbReference>
<dbReference type="BioGRID" id="849238">
    <property type="interactions" value="6"/>
</dbReference>
<dbReference type="DIP" id="DIP-10122N"/>
<dbReference type="FunCoup" id="P10441">
    <property type="interactions" value="429"/>
</dbReference>
<dbReference type="IntAct" id="P10441">
    <property type="interactions" value="26"/>
</dbReference>
<dbReference type="STRING" id="511145.b0182"/>
<dbReference type="CAZy" id="GT19">
    <property type="family name" value="Glycosyltransferase Family 19"/>
</dbReference>
<dbReference type="jPOST" id="P10441"/>
<dbReference type="PaxDb" id="511145-b0182"/>
<dbReference type="DNASU" id="944838"/>
<dbReference type="EnsemblBacteria" id="AAC73293">
    <property type="protein sequence ID" value="AAC73293"/>
    <property type="gene ID" value="b0182"/>
</dbReference>
<dbReference type="GeneID" id="93777243"/>
<dbReference type="GeneID" id="944838"/>
<dbReference type="KEGG" id="ecj:JW0177"/>
<dbReference type="KEGG" id="eco:b0182"/>
<dbReference type="KEGG" id="ecoc:C3026_00835"/>
<dbReference type="PATRIC" id="fig|1411691.4.peg.2097"/>
<dbReference type="EchoBASE" id="EB0541"/>
<dbReference type="eggNOG" id="COG0763">
    <property type="taxonomic scope" value="Bacteria"/>
</dbReference>
<dbReference type="HOGENOM" id="CLU_036577_3_0_6"/>
<dbReference type="InParanoid" id="P10441"/>
<dbReference type="OMA" id="YVILPFE"/>
<dbReference type="OrthoDB" id="9801642at2"/>
<dbReference type="PhylomeDB" id="P10441"/>
<dbReference type="BioCyc" id="EcoCyc:LIPIDADISACCHARIDESYNTH-MONOMER"/>
<dbReference type="BioCyc" id="MetaCyc:LIPIDADISACCHARIDESYNTH-MONOMER"/>
<dbReference type="BRENDA" id="2.4.1.182">
    <property type="organism ID" value="2026"/>
</dbReference>
<dbReference type="SABIO-RK" id="P10441"/>
<dbReference type="UniPathway" id="UPA00359">
    <property type="reaction ID" value="UER00481"/>
</dbReference>
<dbReference type="PRO" id="PR:P10441"/>
<dbReference type="Proteomes" id="UP000000625">
    <property type="component" value="Chromosome"/>
</dbReference>
<dbReference type="GO" id="GO:0005737">
    <property type="term" value="C:cytoplasm"/>
    <property type="evidence" value="ECO:0000314"/>
    <property type="project" value="EcoCyc"/>
</dbReference>
<dbReference type="GO" id="GO:0031234">
    <property type="term" value="C:extrinsic component of cytoplasmic side of plasma membrane"/>
    <property type="evidence" value="ECO:0000305"/>
    <property type="project" value="EcoCyc"/>
</dbReference>
<dbReference type="GO" id="GO:0019897">
    <property type="term" value="C:extrinsic component of plasma membrane"/>
    <property type="evidence" value="ECO:0000314"/>
    <property type="project" value="EcoliWiki"/>
</dbReference>
<dbReference type="GO" id="GO:0042802">
    <property type="term" value="F:identical protein binding"/>
    <property type="evidence" value="ECO:0000314"/>
    <property type="project" value="EcoCyc"/>
</dbReference>
<dbReference type="GO" id="GO:0008915">
    <property type="term" value="F:lipid-A-disaccharide synthase activity"/>
    <property type="evidence" value="ECO:0000314"/>
    <property type="project" value="EcoCyc"/>
</dbReference>
<dbReference type="GO" id="GO:0005543">
    <property type="term" value="F:phospholipid binding"/>
    <property type="evidence" value="ECO:0000314"/>
    <property type="project" value="EcoliWiki"/>
</dbReference>
<dbReference type="GO" id="GO:0009245">
    <property type="term" value="P:lipid A biosynthetic process"/>
    <property type="evidence" value="ECO:0000315"/>
    <property type="project" value="EcoCyc"/>
</dbReference>
<dbReference type="CDD" id="cd01635">
    <property type="entry name" value="Glycosyltransferase_GTB-type"/>
    <property type="match status" value="1"/>
</dbReference>
<dbReference type="HAMAP" id="MF_00392">
    <property type="entry name" value="LpxB"/>
    <property type="match status" value="1"/>
</dbReference>
<dbReference type="InterPro" id="IPR003835">
    <property type="entry name" value="Glyco_trans_19"/>
</dbReference>
<dbReference type="NCBIfam" id="TIGR00215">
    <property type="entry name" value="lpxB"/>
    <property type="match status" value="1"/>
</dbReference>
<dbReference type="PANTHER" id="PTHR30372">
    <property type="entry name" value="LIPID-A-DISACCHARIDE SYNTHASE"/>
    <property type="match status" value="1"/>
</dbReference>
<dbReference type="PANTHER" id="PTHR30372:SF4">
    <property type="entry name" value="LIPID-A-DISACCHARIDE SYNTHASE, MITOCHONDRIAL-RELATED"/>
    <property type="match status" value="1"/>
</dbReference>
<dbReference type="Pfam" id="PF02684">
    <property type="entry name" value="LpxB"/>
    <property type="match status" value="1"/>
</dbReference>
<dbReference type="SUPFAM" id="SSF53756">
    <property type="entry name" value="UDP-Glycosyltransferase/glycogen phosphorylase"/>
    <property type="match status" value="1"/>
</dbReference>
<proteinExistence type="evidence at protein level"/>
<feature type="chain" id="PRO_0000190164" description="Lipid-A-disaccharide synthase">
    <location>
        <begin position="1"/>
        <end position="382"/>
    </location>
</feature>
<feature type="sequence conflict" description="In Ref. 1 and 2." evidence="2" ref="1 2">
    <original>F</original>
    <variation>V</variation>
    <location>
        <position position="149"/>
    </location>
</feature>
<feature type="strand" evidence="3">
    <location>
        <begin position="8"/>
        <end position="13"/>
    </location>
</feature>
<feature type="helix" evidence="3">
    <location>
        <begin position="16"/>
        <end position="32"/>
    </location>
</feature>
<feature type="strand" evidence="3">
    <location>
        <begin position="37"/>
        <end position="42"/>
    </location>
</feature>
<feature type="helix" evidence="3">
    <location>
        <begin position="44"/>
        <end position="48"/>
    </location>
</feature>
<feature type="strand" evidence="3">
    <location>
        <begin position="52"/>
        <end position="56"/>
    </location>
</feature>
<feature type="helix" evidence="3">
    <location>
        <begin position="57"/>
        <end position="59"/>
    </location>
</feature>
<feature type="helix" evidence="3">
    <location>
        <begin position="73"/>
        <end position="89"/>
    </location>
</feature>
<feature type="strand" evidence="3">
    <location>
        <begin position="92"/>
        <end position="98"/>
    </location>
</feature>
<feature type="helix" evidence="3">
    <location>
        <begin position="100"/>
        <end position="112"/>
    </location>
</feature>
<feature type="strand" evidence="3">
    <location>
        <begin position="117"/>
        <end position="121"/>
    </location>
</feature>
<feature type="turn" evidence="3">
    <location>
        <begin position="124"/>
        <end position="126"/>
    </location>
</feature>
<feature type="helix" evidence="3">
    <location>
        <begin position="130"/>
        <end position="139"/>
    </location>
</feature>
<feature type="strand" evidence="3">
    <location>
        <begin position="141"/>
        <end position="147"/>
    </location>
</feature>
<feature type="helix" evidence="3">
    <location>
        <begin position="148"/>
        <end position="155"/>
    </location>
</feature>
<feature type="turn" evidence="3">
    <location>
        <begin position="156"/>
        <end position="158"/>
    </location>
</feature>
<feature type="strand" evidence="3">
    <location>
        <begin position="161"/>
        <end position="163"/>
    </location>
</feature>
<feature type="helix" evidence="3">
    <location>
        <begin position="167"/>
        <end position="171"/>
    </location>
</feature>
<feature type="helix" evidence="3">
    <location>
        <begin position="178"/>
        <end position="185"/>
    </location>
</feature>
<feature type="strand" evidence="3">
    <location>
        <begin position="193"/>
        <end position="197"/>
    </location>
</feature>
<feature type="helix" evidence="3">
    <location>
        <begin position="202"/>
        <end position="222"/>
    </location>
</feature>
<feature type="strand" evidence="3">
    <location>
        <begin position="227"/>
        <end position="234"/>
    </location>
</feature>
<feature type="helix" evidence="3">
    <location>
        <begin position="235"/>
        <end position="248"/>
    </location>
</feature>
<feature type="strand" evidence="3">
    <location>
        <begin position="255"/>
        <end position="259"/>
    </location>
</feature>
<feature type="helix" evidence="3">
    <location>
        <begin position="261"/>
        <end position="267"/>
    </location>
</feature>
<feature type="strand" evidence="3">
    <location>
        <begin position="269"/>
        <end position="273"/>
    </location>
</feature>
<feature type="helix" evidence="3">
    <location>
        <begin position="277"/>
        <end position="284"/>
    </location>
</feature>
<feature type="strand" evidence="3">
    <location>
        <begin position="289"/>
        <end position="291"/>
    </location>
</feature>
<feature type="helix" evidence="3">
    <location>
        <begin position="297"/>
        <end position="309"/>
    </location>
</feature>
<feature type="helix" evidence="3">
    <location>
        <begin position="314"/>
        <end position="319"/>
    </location>
</feature>
<feature type="helix" evidence="3">
    <location>
        <begin position="329"/>
        <end position="331"/>
    </location>
</feature>
<feature type="helix" evidence="3">
    <location>
        <begin position="334"/>
        <end position="345"/>
    </location>
</feature>
<feature type="helix" evidence="3">
    <location>
        <begin position="349"/>
        <end position="364"/>
    </location>
</feature>
<feature type="helix" evidence="3">
    <location>
        <begin position="369"/>
        <end position="380"/>
    </location>
</feature>
<keyword id="KW-0002">3D-structure</keyword>
<keyword id="KW-0328">Glycosyltransferase</keyword>
<keyword id="KW-0441">Lipid A biosynthesis</keyword>
<keyword id="KW-0444">Lipid biosynthesis</keyword>
<keyword id="KW-0443">Lipid metabolism</keyword>
<keyword id="KW-1185">Reference proteome</keyword>
<keyword id="KW-0808">Transferase</keyword>
<organism>
    <name type="scientific">Escherichia coli (strain K12)</name>
    <dbReference type="NCBI Taxonomy" id="83333"/>
    <lineage>
        <taxon>Bacteria</taxon>
        <taxon>Pseudomonadati</taxon>
        <taxon>Pseudomonadota</taxon>
        <taxon>Gammaproteobacteria</taxon>
        <taxon>Enterobacterales</taxon>
        <taxon>Enterobacteriaceae</taxon>
        <taxon>Escherichia</taxon>
    </lineage>
</organism>
<name>LPXB_ECOLI</name>
<sequence>MTEQRPLTIALVAGETSGDILGAGLIRALKEHVPNARFVGVAGPRMQAEGCEAWYEMEELAVMGIVEVLGRLRRLLHIRADLTKRFGELKPDVFVGIDAPDFNITLEGNLKKQGIKTIHYVSPSVWAWRQKRVFKIGRATDLVLAFLPFEKAFYDKYNVPCRFIGHTMADAMPLDPDKNAARDVLGIPHDAHCLALLPGSRGAEVEMLSADFLKTAQLLRQTYPDLEIVVPLVNAKRREQFERIKAEVAPDLSVHLLDGMGREAMVASDAALLASGTAALECMLAKCPMVVGYRMKPFTFWLAKRLVKTDYVSLPNLLAGRELVKELLQEECEPQKLAAALLPLLANGKTSHAMHDTFRELHQQIRCNADEQAAQAVLELAQ</sequence>